<sequence>MKSILGKKIGMTQIFNEDGSVVPVTVIEAGPMVVTQIKTKEKEGYNAIQVGYIEKKEKHVNQPMRGHFGKAGVSFKKHLREFKINDDEQFNLGDEIKLDIFQDGDVVDVIGISKGKGTQGAIVRHNYSRGPMGHGSKSHRVAGARSAGSYPARVFKGRKGSGKMGHDRVTVQNLKIVKVDNERNLLLIKGAVPGNKGGVVTVREAIKSK</sequence>
<keyword id="KW-1185">Reference proteome</keyword>
<keyword id="KW-0687">Ribonucleoprotein</keyword>
<keyword id="KW-0689">Ribosomal protein</keyword>
<keyword id="KW-0694">RNA-binding</keyword>
<keyword id="KW-0699">rRNA-binding</keyword>
<organism>
    <name type="scientific">Finegoldia magna (strain ATCC 29328 / DSM 20472 / WAL 2508)</name>
    <name type="common">Peptostreptococcus magnus</name>
    <dbReference type="NCBI Taxonomy" id="334413"/>
    <lineage>
        <taxon>Bacteria</taxon>
        <taxon>Bacillati</taxon>
        <taxon>Bacillota</taxon>
        <taxon>Tissierellia</taxon>
        <taxon>Tissierellales</taxon>
        <taxon>Peptoniphilaceae</taxon>
        <taxon>Finegoldia</taxon>
    </lineage>
</organism>
<accession>B0RZU0</accession>
<dbReference type="EMBL" id="AP008971">
    <property type="protein sequence ID" value="BAG07573.1"/>
    <property type="molecule type" value="Genomic_DNA"/>
</dbReference>
<dbReference type="RefSeq" id="WP_002840170.1">
    <property type="nucleotide sequence ID" value="NC_010376.1"/>
</dbReference>
<dbReference type="SMR" id="B0RZU0"/>
<dbReference type="STRING" id="334413.FMG_0155"/>
<dbReference type="KEGG" id="fma:FMG_0155"/>
<dbReference type="eggNOG" id="COG0087">
    <property type="taxonomic scope" value="Bacteria"/>
</dbReference>
<dbReference type="HOGENOM" id="CLU_044142_4_1_9"/>
<dbReference type="Proteomes" id="UP000001319">
    <property type="component" value="Chromosome"/>
</dbReference>
<dbReference type="GO" id="GO:0022625">
    <property type="term" value="C:cytosolic large ribosomal subunit"/>
    <property type="evidence" value="ECO:0007669"/>
    <property type="project" value="TreeGrafter"/>
</dbReference>
<dbReference type="GO" id="GO:0019843">
    <property type="term" value="F:rRNA binding"/>
    <property type="evidence" value="ECO:0007669"/>
    <property type="project" value="UniProtKB-UniRule"/>
</dbReference>
<dbReference type="GO" id="GO:0003735">
    <property type="term" value="F:structural constituent of ribosome"/>
    <property type="evidence" value="ECO:0007669"/>
    <property type="project" value="InterPro"/>
</dbReference>
<dbReference type="GO" id="GO:0006412">
    <property type="term" value="P:translation"/>
    <property type="evidence" value="ECO:0007669"/>
    <property type="project" value="UniProtKB-UniRule"/>
</dbReference>
<dbReference type="FunFam" id="2.40.30.10:FF:000004">
    <property type="entry name" value="50S ribosomal protein L3"/>
    <property type="match status" value="1"/>
</dbReference>
<dbReference type="FunFam" id="3.30.160.810:FF:000001">
    <property type="entry name" value="50S ribosomal protein L3"/>
    <property type="match status" value="1"/>
</dbReference>
<dbReference type="Gene3D" id="3.30.160.810">
    <property type="match status" value="1"/>
</dbReference>
<dbReference type="Gene3D" id="2.40.30.10">
    <property type="entry name" value="Translation factors"/>
    <property type="match status" value="1"/>
</dbReference>
<dbReference type="HAMAP" id="MF_01325_B">
    <property type="entry name" value="Ribosomal_uL3_B"/>
    <property type="match status" value="1"/>
</dbReference>
<dbReference type="InterPro" id="IPR000597">
    <property type="entry name" value="Ribosomal_uL3"/>
</dbReference>
<dbReference type="InterPro" id="IPR019927">
    <property type="entry name" value="Ribosomal_uL3_bac/org-type"/>
</dbReference>
<dbReference type="InterPro" id="IPR019926">
    <property type="entry name" value="Ribosomal_uL3_CS"/>
</dbReference>
<dbReference type="InterPro" id="IPR009000">
    <property type="entry name" value="Transl_B-barrel_sf"/>
</dbReference>
<dbReference type="NCBIfam" id="TIGR03625">
    <property type="entry name" value="L3_bact"/>
    <property type="match status" value="1"/>
</dbReference>
<dbReference type="PANTHER" id="PTHR11229">
    <property type="entry name" value="50S RIBOSOMAL PROTEIN L3"/>
    <property type="match status" value="1"/>
</dbReference>
<dbReference type="PANTHER" id="PTHR11229:SF16">
    <property type="entry name" value="LARGE RIBOSOMAL SUBUNIT PROTEIN UL3C"/>
    <property type="match status" value="1"/>
</dbReference>
<dbReference type="Pfam" id="PF00297">
    <property type="entry name" value="Ribosomal_L3"/>
    <property type="match status" value="1"/>
</dbReference>
<dbReference type="SUPFAM" id="SSF50447">
    <property type="entry name" value="Translation proteins"/>
    <property type="match status" value="1"/>
</dbReference>
<dbReference type="PROSITE" id="PS00474">
    <property type="entry name" value="RIBOSOMAL_L3"/>
    <property type="match status" value="1"/>
</dbReference>
<feature type="chain" id="PRO_1000141870" description="Large ribosomal subunit protein uL3">
    <location>
        <begin position="1"/>
        <end position="209"/>
    </location>
</feature>
<feature type="region of interest" description="Disordered" evidence="2">
    <location>
        <begin position="127"/>
        <end position="147"/>
    </location>
</feature>
<comment type="function">
    <text evidence="1">One of the primary rRNA binding proteins, it binds directly near the 3'-end of the 23S rRNA, where it nucleates assembly of the 50S subunit.</text>
</comment>
<comment type="subunit">
    <text evidence="1">Part of the 50S ribosomal subunit. Forms a cluster with proteins L14 and L19.</text>
</comment>
<comment type="similarity">
    <text evidence="1">Belongs to the universal ribosomal protein uL3 family.</text>
</comment>
<name>RL3_FINM2</name>
<protein>
    <recommendedName>
        <fullName evidence="1">Large ribosomal subunit protein uL3</fullName>
    </recommendedName>
    <alternativeName>
        <fullName evidence="3">50S ribosomal protein L3</fullName>
    </alternativeName>
</protein>
<evidence type="ECO:0000255" key="1">
    <source>
        <dbReference type="HAMAP-Rule" id="MF_01325"/>
    </source>
</evidence>
<evidence type="ECO:0000256" key="2">
    <source>
        <dbReference type="SAM" id="MobiDB-lite"/>
    </source>
</evidence>
<evidence type="ECO:0000305" key="3"/>
<gene>
    <name evidence="1" type="primary">rplC</name>
    <name type="ordered locus">FMG_0155</name>
</gene>
<reference key="1">
    <citation type="journal article" date="2008" name="DNA Res.">
        <title>Complete genome sequence of Finegoldia magna, an anaerobic opportunistic pathogen.</title>
        <authorList>
            <person name="Goto T."/>
            <person name="Yamashita A."/>
            <person name="Hirakawa H."/>
            <person name="Matsutani M."/>
            <person name="Todo K."/>
            <person name="Ohshima K."/>
            <person name="Toh H."/>
            <person name="Miyamoto K."/>
            <person name="Kuhara S."/>
            <person name="Hattori M."/>
            <person name="Shimizu T."/>
            <person name="Akimoto S."/>
        </authorList>
    </citation>
    <scope>NUCLEOTIDE SEQUENCE [LARGE SCALE GENOMIC DNA]</scope>
    <source>
        <strain>ATCC 29328 / DSM 20472 / WAL 2508</strain>
    </source>
</reference>
<proteinExistence type="inferred from homology"/>